<evidence type="ECO:0000250" key="1">
    <source>
        <dbReference type="UniProtKB" id="O64204"/>
    </source>
</evidence>
<evidence type="ECO:0000255" key="2"/>
<evidence type="ECO:0000305" key="3"/>
<reference key="1">
    <citation type="journal article" date="1997" name="Mol. Microbiol.">
        <title>The lytic enzyme of the pneumococcal phage Dp-1: a chimeric lysin of intergeneric origin.</title>
        <authorList>
            <person name="Sheehan M.M."/>
            <person name="Garcia J.L."/>
            <person name="Lopez R."/>
            <person name="Garcia P."/>
        </authorList>
    </citation>
    <scope>NUCLEOTIDE SEQUENCE [GENOMIC DNA]</scope>
</reference>
<protein>
    <recommendedName>
        <fullName>Holin</fullName>
    </recommendedName>
</protein>
<accession>O03978</accession>
<keyword id="KW-0204">Cytolysis</keyword>
<keyword id="KW-1030">Host cell inner membrane</keyword>
<keyword id="KW-0578">Host cell lysis by virus</keyword>
<keyword id="KW-1032">Host cell membrane</keyword>
<keyword id="KW-1043">Host membrane</keyword>
<keyword id="KW-0472">Membrane</keyword>
<keyword id="KW-0812">Transmembrane</keyword>
<keyword id="KW-1133">Transmembrane helix</keyword>
<keyword id="KW-1188">Viral release from host cell</keyword>
<proteinExistence type="inferred from homology"/>
<dbReference type="EMBL" id="Z93946">
    <property type="protein sequence ID" value="CAB07985.1"/>
    <property type="molecule type" value="Genomic_DNA"/>
</dbReference>
<dbReference type="RefSeq" id="YP_004306946.1">
    <property type="nucleotide sequence ID" value="NC_015274.1"/>
</dbReference>
<dbReference type="TCDB" id="1.E.24.1.1">
    <property type="family name" value="the bacterophage dp-1 holin (dp-1 holin) family"/>
</dbReference>
<dbReference type="KEGG" id="vg:10358654"/>
<dbReference type="GO" id="GO:0020002">
    <property type="term" value="C:host cell plasma membrane"/>
    <property type="evidence" value="ECO:0007669"/>
    <property type="project" value="UniProtKB-SubCell"/>
</dbReference>
<dbReference type="GO" id="GO:0016020">
    <property type="term" value="C:membrane"/>
    <property type="evidence" value="ECO:0007669"/>
    <property type="project" value="UniProtKB-KW"/>
</dbReference>
<dbReference type="GO" id="GO:0031640">
    <property type="term" value="P:killing of cells of another organism"/>
    <property type="evidence" value="ECO:0007669"/>
    <property type="project" value="UniProtKB-KW"/>
</dbReference>
<dbReference type="InterPro" id="IPR031612">
    <property type="entry name" value="Phage_holin_Dp1"/>
</dbReference>
<dbReference type="Pfam" id="PF16938">
    <property type="entry name" value="Phage_holin_Dp1"/>
    <property type="match status" value="1"/>
</dbReference>
<gene>
    <name type="primary">dph</name>
</gene>
<organismHost>
    <name type="scientific">Streptococcus pneumoniae</name>
    <dbReference type="NCBI Taxonomy" id="1313"/>
</organismHost>
<feature type="chain" id="PRO_0000077800" description="Holin">
    <location>
        <begin position="1"/>
        <end position="74"/>
    </location>
</feature>
<feature type="transmembrane region" description="Helical" evidence="2">
    <location>
        <begin position="15"/>
        <end position="35"/>
    </location>
</feature>
<feature type="transmembrane region" description="Helical" evidence="2">
    <location>
        <begin position="37"/>
        <end position="57"/>
    </location>
</feature>
<sequence length="74" mass="7861">MKLSNEQYDVAKNVVTVVVPAAIALITGLGALYQFDTTAITGTIALLATFAGTVLGVSSRNYQKEQEAQNNEVE</sequence>
<name>HOLIN_BPDP1</name>
<organism>
    <name type="scientific">Pneumococcus phage Dp-1</name>
    <name type="common">Bacteriophage Dp-1</name>
    <dbReference type="NCBI Taxonomy" id="59241"/>
    <lineage>
        <taxon>Viruses</taxon>
        <taxon>Duplodnaviria</taxon>
        <taxon>Heunggongvirae</taxon>
        <taxon>Uroviricota</taxon>
        <taxon>Caudoviricetes</taxon>
    </lineage>
</organism>
<comment type="function">
    <text evidence="1">Accumulates harmlessly in the cytoplasmic membrane until it reaches a critical concentration that triggers the formation of micron-scale pores (holes) causing host cell membrane disruption and endolysin escape into the periplasmic space. Determines the precise timing of host cell lysis. Participates with the endolysin protein in the sequential events which lead to the programmed host cell lysis releasing the mature viral particles from the host cell.</text>
</comment>
<comment type="subunit">
    <text evidence="3">Homomultimer.</text>
</comment>
<comment type="subcellular location">
    <subcellularLocation>
        <location>Host cell inner membrane</location>
        <topology evidence="3">Multi-pass membrane protein</topology>
    </subcellularLocation>
</comment>